<comment type="function">
    <text evidence="1">An accessory protein needed during the final step in the assembly of 30S ribosomal subunit, possibly for assembly of the head region. Essential for efficient processing of 16S rRNA. May be needed both before and after RbfA during the maturation of 16S rRNA. It has affinity for free ribosomal 30S subunits but not for 70S ribosomes.</text>
</comment>
<comment type="subunit">
    <text evidence="1">Binds ribosomal protein uS19.</text>
</comment>
<comment type="subcellular location">
    <subcellularLocation>
        <location evidence="1">Cytoplasm</location>
    </subcellularLocation>
</comment>
<comment type="domain">
    <text evidence="1">The PRC barrel domain binds ribosomal protein uS19.</text>
</comment>
<comment type="similarity">
    <text evidence="1">Belongs to the RimM family.</text>
</comment>
<name>RIMM_LACCB</name>
<gene>
    <name evidence="1" type="primary">rimM</name>
    <name type="ordered locus">LCABL_18120</name>
</gene>
<evidence type="ECO:0000255" key="1">
    <source>
        <dbReference type="HAMAP-Rule" id="MF_00014"/>
    </source>
</evidence>
<reference key="1">
    <citation type="submission" date="2008-06" db="EMBL/GenBank/DDBJ databases">
        <title>Lactobacillus casei BL23 complete genome sequence.</title>
        <authorList>
            <person name="Maze A."/>
            <person name="Boel G."/>
            <person name="Bourand A."/>
            <person name="Loux V."/>
            <person name="Gibrat J.F."/>
            <person name="Zuniga M."/>
            <person name="Hartke A."/>
            <person name="Deutscher J."/>
        </authorList>
    </citation>
    <scope>NUCLEOTIDE SEQUENCE [LARGE SCALE GENOMIC DNA]</scope>
    <source>
        <strain>BL23</strain>
    </source>
</reference>
<dbReference type="EMBL" id="FM177140">
    <property type="protein sequence ID" value="CAQ66892.1"/>
    <property type="molecule type" value="Genomic_DNA"/>
</dbReference>
<dbReference type="SMR" id="B3WEU1"/>
<dbReference type="KEGG" id="lcb:LCABL_18120"/>
<dbReference type="HOGENOM" id="CLU_077636_3_1_9"/>
<dbReference type="GO" id="GO:0005737">
    <property type="term" value="C:cytoplasm"/>
    <property type="evidence" value="ECO:0007669"/>
    <property type="project" value="UniProtKB-SubCell"/>
</dbReference>
<dbReference type="GO" id="GO:0005840">
    <property type="term" value="C:ribosome"/>
    <property type="evidence" value="ECO:0007669"/>
    <property type="project" value="InterPro"/>
</dbReference>
<dbReference type="GO" id="GO:0043022">
    <property type="term" value="F:ribosome binding"/>
    <property type="evidence" value="ECO:0007669"/>
    <property type="project" value="InterPro"/>
</dbReference>
<dbReference type="GO" id="GO:0042274">
    <property type="term" value="P:ribosomal small subunit biogenesis"/>
    <property type="evidence" value="ECO:0007669"/>
    <property type="project" value="UniProtKB-UniRule"/>
</dbReference>
<dbReference type="GO" id="GO:0006364">
    <property type="term" value="P:rRNA processing"/>
    <property type="evidence" value="ECO:0007669"/>
    <property type="project" value="UniProtKB-UniRule"/>
</dbReference>
<dbReference type="Gene3D" id="2.30.30.240">
    <property type="entry name" value="PRC-barrel domain"/>
    <property type="match status" value="1"/>
</dbReference>
<dbReference type="Gene3D" id="2.40.30.60">
    <property type="entry name" value="RimM"/>
    <property type="match status" value="1"/>
</dbReference>
<dbReference type="HAMAP" id="MF_00014">
    <property type="entry name" value="Ribosome_mat_RimM"/>
    <property type="match status" value="1"/>
</dbReference>
<dbReference type="InterPro" id="IPR011033">
    <property type="entry name" value="PRC_barrel-like_sf"/>
</dbReference>
<dbReference type="InterPro" id="IPR056792">
    <property type="entry name" value="PRC_RimM"/>
</dbReference>
<dbReference type="InterPro" id="IPR011961">
    <property type="entry name" value="RimM"/>
</dbReference>
<dbReference type="InterPro" id="IPR002676">
    <property type="entry name" value="RimM_N"/>
</dbReference>
<dbReference type="InterPro" id="IPR036976">
    <property type="entry name" value="RimM_N_sf"/>
</dbReference>
<dbReference type="InterPro" id="IPR009000">
    <property type="entry name" value="Transl_B-barrel_sf"/>
</dbReference>
<dbReference type="NCBIfam" id="TIGR02273">
    <property type="entry name" value="16S_RimM"/>
    <property type="match status" value="1"/>
</dbReference>
<dbReference type="PANTHER" id="PTHR33692">
    <property type="entry name" value="RIBOSOME MATURATION FACTOR RIMM"/>
    <property type="match status" value="1"/>
</dbReference>
<dbReference type="PANTHER" id="PTHR33692:SF1">
    <property type="entry name" value="RIBOSOME MATURATION FACTOR RIMM"/>
    <property type="match status" value="1"/>
</dbReference>
<dbReference type="Pfam" id="PF24986">
    <property type="entry name" value="PRC_RimM"/>
    <property type="match status" value="1"/>
</dbReference>
<dbReference type="Pfam" id="PF01782">
    <property type="entry name" value="RimM"/>
    <property type="match status" value="1"/>
</dbReference>
<dbReference type="SUPFAM" id="SSF50346">
    <property type="entry name" value="PRC-barrel domain"/>
    <property type="match status" value="1"/>
</dbReference>
<dbReference type="SUPFAM" id="SSF50447">
    <property type="entry name" value="Translation proteins"/>
    <property type="match status" value="1"/>
</dbReference>
<feature type="chain" id="PRO_1000089505" description="Ribosome maturation factor RimM">
    <location>
        <begin position="1"/>
        <end position="172"/>
    </location>
</feature>
<feature type="domain" description="PRC barrel" evidence="1">
    <location>
        <begin position="93"/>
        <end position="167"/>
    </location>
</feature>
<keyword id="KW-0143">Chaperone</keyword>
<keyword id="KW-0963">Cytoplasm</keyword>
<keyword id="KW-0690">Ribosome biogenesis</keyword>
<keyword id="KW-0698">rRNA processing</keyword>
<sequence>MPDYYDIGTIVNTHGIRGEVRVLVTTDFPADRFKVGNTVYVATSPKTALTIQSVREHKGLTLLTFKDYTDINQVLPFKGKKLQVTETALQPLDEGSYYYKDIIGLTVIDEQGQTLGKVNEILSPGPNDVWVIPRSGKSDILLPFLKSVVQSIDLDQKVAHVIVPEGLIDDAD</sequence>
<proteinExistence type="inferred from homology"/>
<protein>
    <recommendedName>
        <fullName evidence="1">Ribosome maturation factor RimM</fullName>
    </recommendedName>
</protein>
<accession>B3WEU1</accession>
<organism>
    <name type="scientific">Lacticaseibacillus casei (strain BL23)</name>
    <name type="common">Lactobacillus casei</name>
    <dbReference type="NCBI Taxonomy" id="543734"/>
    <lineage>
        <taxon>Bacteria</taxon>
        <taxon>Bacillati</taxon>
        <taxon>Bacillota</taxon>
        <taxon>Bacilli</taxon>
        <taxon>Lactobacillales</taxon>
        <taxon>Lactobacillaceae</taxon>
        <taxon>Lacticaseibacillus</taxon>
    </lineage>
</organism>